<dbReference type="EMBL" id="BX936398">
    <property type="protein sequence ID" value="CAH20633.1"/>
    <property type="molecule type" value="Genomic_DNA"/>
</dbReference>
<dbReference type="RefSeq" id="WP_002211349.1">
    <property type="nucleotide sequence ID" value="NZ_CP009712.1"/>
</dbReference>
<dbReference type="SMR" id="Q66CL0"/>
<dbReference type="GeneID" id="96664964"/>
<dbReference type="KEGG" id="ypo:BZ17_1126"/>
<dbReference type="KEGG" id="yps:YPTB1393"/>
<dbReference type="PATRIC" id="fig|273123.14.peg.1196"/>
<dbReference type="Proteomes" id="UP000001011">
    <property type="component" value="Chromosome"/>
</dbReference>
<dbReference type="GO" id="GO:0030163">
    <property type="term" value="P:protein catabolic process"/>
    <property type="evidence" value="ECO:0007669"/>
    <property type="project" value="InterPro"/>
</dbReference>
<dbReference type="GO" id="GO:0006508">
    <property type="term" value="P:proteolysis"/>
    <property type="evidence" value="ECO:0007669"/>
    <property type="project" value="UniProtKB-UniRule"/>
</dbReference>
<dbReference type="FunFam" id="3.30.1390.10:FF:000002">
    <property type="entry name" value="ATP-dependent Clp protease adapter protein ClpS"/>
    <property type="match status" value="1"/>
</dbReference>
<dbReference type="Gene3D" id="3.30.1390.10">
    <property type="match status" value="1"/>
</dbReference>
<dbReference type="HAMAP" id="MF_00302">
    <property type="entry name" value="ClpS"/>
    <property type="match status" value="1"/>
</dbReference>
<dbReference type="InterPro" id="IPR022935">
    <property type="entry name" value="ClpS"/>
</dbReference>
<dbReference type="InterPro" id="IPR003769">
    <property type="entry name" value="ClpS_core"/>
</dbReference>
<dbReference type="InterPro" id="IPR014719">
    <property type="entry name" value="Ribosomal_bL12_C/ClpS-like"/>
</dbReference>
<dbReference type="NCBIfam" id="NF000670">
    <property type="entry name" value="PRK00033.1-3"/>
    <property type="match status" value="1"/>
</dbReference>
<dbReference type="NCBIfam" id="NF000672">
    <property type="entry name" value="PRK00033.1-5"/>
    <property type="match status" value="1"/>
</dbReference>
<dbReference type="PANTHER" id="PTHR33473:SF19">
    <property type="entry name" value="ATP-DEPENDENT CLP PROTEASE ADAPTER PROTEIN CLPS"/>
    <property type="match status" value="1"/>
</dbReference>
<dbReference type="PANTHER" id="PTHR33473">
    <property type="entry name" value="ATP-DEPENDENT CLP PROTEASE ADAPTER PROTEIN CLPS1, CHLOROPLASTIC"/>
    <property type="match status" value="1"/>
</dbReference>
<dbReference type="Pfam" id="PF02617">
    <property type="entry name" value="ClpS"/>
    <property type="match status" value="1"/>
</dbReference>
<dbReference type="SUPFAM" id="SSF54736">
    <property type="entry name" value="ClpS-like"/>
    <property type="match status" value="1"/>
</dbReference>
<gene>
    <name evidence="1" type="primary">clpS</name>
    <name type="ordered locus">YPTB1393</name>
</gene>
<organism>
    <name type="scientific">Yersinia pseudotuberculosis serotype I (strain IP32953)</name>
    <dbReference type="NCBI Taxonomy" id="273123"/>
    <lineage>
        <taxon>Bacteria</taxon>
        <taxon>Pseudomonadati</taxon>
        <taxon>Pseudomonadota</taxon>
        <taxon>Gammaproteobacteria</taxon>
        <taxon>Enterobacterales</taxon>
        <taxon>Yersiniaceae</taxon>
        <taxon>Yersinia</taxon>
    </lineage>
</organism>
<name>CLPS_YERPS</name>
<feature type="chain" id="PRO_0000215768" description="ATP-dependent Clp protease adapter protein ClpS">
    <location>
        <begin position="1"/>
        <end position="106"/>
    </location>
</feature>
<accession>Q66CL0</accession>
<evidence type="ECO:0000255" key="1">
    <source>
        <dbReference type="HAMAP-Rule" id="MF_00302"/>
    </source>
</evidence>
<protein>
    <recommendedName>
        <fullName evidence="1">ATP-dependent Clp protease adapter protein ClpS</fullName>
    </recommendedName>
</protein>
<proteinExistence type="inferred from homology"/>
<comment type="function">
    <text evidence="1">Involved in the modulation of the specificity of the ClpAP-mediated ATP-dependent protein degradation.</text>
</comment>
<comment type="subunit">
    <text evidence="1">Binds to the N-terminal domain of the chaperone ClpA.</text>
</comment>
<comment type="similarity">
    <text evidence="1">Belongs to the ClpS family.</text>
</comment>
<reference key="1">
    <citation type="journal article" date="2004" name="Proc. Natl. Acad. Sci. U.S.A.">
        <title>Insights into the evolution of Yersinia pestis through whole-genome comparison with Yersinia pseudotuberculosis.</title>
        <authorList>
            <person name="Chain P.S.G."/>
            <person name="Carniel E."/>
            <person name="Larimer F.W."/>
            <person name="Lamerdin J."/>
            <person name="Stoutland P.O."/>
            <person name="Regala W.M."/>
            <person name="Georgescu A.M."/>
            <person name="Vergez L.M."/>
            <person name="Land M.L."/>
            <person name="Motin V.L."/>
            <person name="Brubaker R.R."/>
            <person name="Fowler J."/>
            <person name="Hinnebusch J."/>
            <person name="Marceau M."/>
            <person name="Medigue C."/>
            <person name="Simonet M."/>
            <person name="Chenal-Francisque V."/>
            <person name="Souza B."/>
            <person name="Dacheux D."/>
            <person name="Elliott J.M."/>
            <person name="Derbise A."/>
            <person name="Hauser L.J."/>
            <person name="Garcia E."/>
        </authorList>
    </citation>
    <scope>NUCLEOTIDE SEQUENCE [LARGE SCALE GENOMIC DNA]</scope>
    <source>
        <strain>IP32953</strain>
    </source>
</reference>
<sequence>MGKNNDWLNFEHLVKDKQIEALQPPSMYKVILNNDDYTPMEFVIDVLQKFFSYDIERATQLMLNVHYQGKAICGVFTAEVAETKVAHVNQYARENEHPLLCTLEKA</sequence>